<feature type="chain" id="PRO_1000125332" description="Probable nicotinate-nucleotide adenylyltransferase">
    <location>
        <begin position="1"/>
        <end position="218"/>
    </location>
</feature>
<comment type="function">
    <text evidence="1">Catalyzes the reversible adenylation of nicotinate mononucleotide (NaMN) to nicotinic acid adenine dinucleotide (NaAD).</text>
</comment>
<comment type="catalytic activity">
    <reaction evidence="1">
        <text>nicotinate beta-D-ribonucleotide + ATP + H(+) = deamido-NAD(+) + diphosphate</text>
        <dbReference type="Rhea" id="RHEA:22860"/>
        <dbReference type="ChEBI" id="CHEBI:15378"/>
        <dbReference type="ChEBI" id="CHEBI:30616"/>
        <dbReference type="ChEBI" id="CHEBI:33019"/>
        <dbReference type="ChEBI" id="CHEBI:57502"/>
        <dbReference type="ChEBI" id="CHEBI:58437"/>
        <dbReference type="EC" id="2.7.7.18"/>
    </reaction>
</comment>
<comment type="pathway">
    <text evidence="1">Cofactor biosynthesis; NAD(+) biosynthesis; deamido-NAD(+) from nicotinate D-ribonucleotide: step 1/1.</text>
</comment>
<comment type="similarity">
    <text evidence="1">Belongs to the NadD family.</text>
</comment>
<sequence>MHSSTHDDLVILGGTFDPIHYGHLRAVEEVRQALAIAQAMLIPAGHPPHRKSPWADARHRLAMTRIAVAHHPQFTVSSWEVEREGPSYTVDTLTALRQQRPDAVLAMVIGMDAFLRFDTWHHWQHILDLTHLVVTGRPGWPAAELPEALRQALYQRRCEDVDALRQTPAGCILFHTVTALEISASNIRSLLAGHQSPRFLLPDEVLDYIDAEGLYQSP</sequence>
<dbReference type="EC" id="2.7.7.18" evidence="1"/>
<dbReference type="EMBL" id="CP001219">
    <property type="protein sequence ID" value="ACK80555.1"/>
    <property type="molecule type" value="Genomic_DNA"/>
</dbReference>
<dbReference type="RefSeq" id="WP_012537494.1">
    <property type="nucleotide sequence ID" value="NC_011761.1"/>
</dbReference>
<dbReference type="SMR" id="B7J9S1"/>
<dbReference type="STRING" id="243159.AFE_2948"/>
<dbReference type="PaxDb" id="243159-AFE_2948"/>
<dbReference type="GeneID" id="65281961"/>
<dbReference type="KEGG" id="afr:AFE_2948"/>
<dbReference type="eggNOG" id="COG1057">
    <property type="taxonomic scope" value="Bacteria"/>
</dbReference>
<dbReference type="HOGENOM" id="CLU_069765_0_0_6"/>
<dbReference type="UniPathway" id="UPA00253">
    <property type="reaction ID" value="UER00332"/>
</dbReference>
<dbReference type="Proteomes" id="UP000001362">
    <property type="component" value="Chromosome"/>
</dbReference>
<dbReference type="GO" id="GO:0005524">
    <property type="term" value="F:ATP binding"/>
    <property type="evidence" value="ECO:0007669"/>
    <property type="project" value="UniProtKB-KW"/>
</dbReference>
<dbReference type="GO" id="GO:0004515">
    <property type="term" value="F:nicotinate-nucleotide adenylyltransferase activity"/>
    <property type="evidence" value="ECO:0007669"/>
    <property type="project" value="UniProtKB-UniRule"/>
</dbReference>
<dbReference type="GO" id="GO:0009435">
    <property type="term" value="P:NAD biosynthetic process"/>
    <property type="evidence" value="ECO:0007669"/>
    <property type="project" value="UniProtKB-UniRule"/>
</dbReference>
<dbReference type="CDD" id="cd02165">
    <property type="entry name" value="NMNAT"/>
    <property type="match status" value="1"/>
</dbReference>
<dbReference type="Gene3D" id="3.40.50.620">
    <property type="entry name" value="HUPs"/>
    <property type="match status" value="1"/>
</dbReference>
<dbReference type="HAMAP" id="MF_00244">
    <property type="entry name" value="NaMN_adenylyltr"/>
    <property type="match status" value="1"/>
</dbReference>
<dbReference type="InterPro" id="IPR004821">
    <property type="entry name" value="Cyt_trans-like"/>
</dbReference>
<dbReference type="InterPro" id="IPR005248">
    <property type="entry name" value="NadD/NMNAT"/>
</dbReference>
<dbReference type="InterPro" id="IPR014729">
    <property type="entry name" value="Rossmann-like_a/b/a_fold"/>
</dbReference>
<dbReference type="NCBIfam" id="TIGR00125">
    <property type="entry name" value="cyt_tran_rel"/>
    <property type="match status" value="1"/>
</dbReference>
<dbReference type="NCBIfam" id="TIGR00482">
    <property type="entry name" value="nicotinate (nicotinamide) nucleotide adenylyltransferase"/>
    <property type="match status" value="1"/>
</dbReference>
<dbReference type="NCBIfam" id="NF000839">
    <property type="entry name" value="PRK00071.1-1"/>
    <property type="match status" value="1"/>
</dbReference>
<dbReference type="NCBIfam" id="NF000840">
    <property type="entry name" value="PRK00071.1-3"/>
    <property type="match status" value="1"/>
</dbReference>
<dbReference type="PANTHER" id="PTHR39321">
    <property type="entry name" value="NICOTINATE-NUCLEOTIDE ADENYLYLTRANSFERASE-RELATED"/>
    <property type="match status" value="1"/>
</dbReference>
<dbReference type="PANTHER" id="PTHR39321:SF3">
    <property type="entry name" value="PHOSPHOPANTETHEINE ADENYLYLTRANSFERASE"/>
    <property type="match status" value="1"/>
</dbReference>
<dbReference type="Pfam" id="PF01467">
    <property type="entry name" value="CTP_transf_like"/>
    <property type="match status" value="1"/>
</dbReference>
<dbReference type="SUPFAM" id="SSF52374">
    <property type="entry name" value="Nucleotidylyl transferase"/>
    <property type="match status" value="1"/>
</dbReference>
<name>NADD_ACIF2</name>
<accession>B7J9S1</accession>
<proteinExistence type="inferred from homology"/>
<gene>
    <name evidence="1" type="primary">nadD</name>
    <name type="ordered locus">AFE_2948</name>
</gene>
<evidence type="ECO:0000255" key="1">
    <source>
        <dbReference type="HAMAP-Rule" id="MF_00244"/>
    </source>
</evidence>
<keyword id="KW-0067">ATP-binding</keyword>
<keyword id="KW-0520">NAD</keyword>
<keyword id="KW-0547">Nucleotide-binding</keyword>
<keyword id="KW-0548">Nucleotidyltransferase</keyword>
<keyword id="KW-0662">Pyridine nucleotide biosynthesis</keyword>
<keyword id="KW-1185">Reference proteome</keyword>
<keyword id="KW-0808">Transferase</keyword>
<protein>
    <recommendedName>
        <fullName evidence="1">Probable nicotinate-nucleotide adenylyltransferase</fullName>
        <ecNumber evidence="1">2.7.7.18</ecNumber>
    </recommendedName>
    <alternativeName>
        <fullName evidence="1">Deamido-NAD(+) diphosphorylase</fullName>
    </alternativeName>
    <alternativeName>
        <fullName evidence="1">Deamido-NAD(+) pyrophosphorylase</fullName>
    </alternativeName>
    <alternativeName>
        <fullName evidence="1">Nicotinate mononucleotide adenylyltransferase</fullName>
        <shortName evidence="1">NaMN adenylyltransferase</shortName>
    </alternativeName>
</protein>
<reference key="1">
    <citation type="journal article" date="2008" name="BMC Genomics">
        <title>Acidithiobacillus ferrooxidans metabolism: from genome sequence to industrial applications.</title>
        <authorList>
            <person name="Valdes J."/>
            <person name="Pedroso I."/>
            <person name="Quatrini R."/>
            <person name="Dodson R.J."/>
            <person name="Tettelin H."/>
            <person name="Blake R. II"/>
            <person name="Eisen J.A."/>
            <person name="Holmes D.S."/>
        </authorList>
    </citation>
    <scope>NUCLEOTIDE SEQUENCE [LARGE SCALE GENOMIC DNA]</scope>
    <source>
        <strain>ATCC 23270 / DSM 14882 / CIP 104768 / NCIMB 8455</strain>
    </source>
</reference>
<organism>
    <name type="scientific">Acidithiobacillus ferrooxidans (strain ATCC 23270 / DSM 14882 / CIP 104768 / NCIMB 8455)</name>
    <name type="common">Ferrobacillus ferrooxidans (strain ATCC 23270)</name>
    <dbReference type="NCBI Taxonomy" id="243159"/>
    <lineage>
        <taxon>Bacteria</taxon>
        <taxon>Pseudomonadati</taxon>
        <taxon>Pseudomonadota</taxon>
        <taxon>Acidithiobacillia</taxon>
        <taxon>Acidithiobacillales</taxon>
        <taxon>Acidithiobacillaceae</taxon>
        <taxon>Acidithiobacillus</taxon>
    </lineage>
</organism>